<evidence type="ECO:0000255" key="1">
    <source>
        <dbReference type="HAMAP-Rule" id="MF_00715"/>
    </source>
</evidence>
<reference key="1">
    <citation type="journal article" date="2000" name="Nature">
        <title>Complete DNA sequence of a serogroup A strain of Neisseria meningitidis Z2491.</title>
        <authorList>
            <person name="Parkhill J."/>
            <person name="Achtman M."/>
            <person name="James K.D."/>
            <person name="Bentley S.D."/>
            <person name="Churcher C.M."/>
            <person name="Klee S.R."/>
            <person name="Morelli G."/>
            <person name="Basham D."/>
            <person name="Brown D."/>
            <person name="Chillingworth T."/>
            <person name="Davies R.M."/>
            <person name="Davis P."/>
            <person name="Devlin K."/>
            <person name="Feltwell T."/>
            <person name="Hamlin N."/>
            <person name="Holroyd S."/>
            <person name="Jagels K."/>
            <person name="Leather S."/>
            <person name="Moule S."/>
            <person name="Mungall K.L."/>
            <person name="Quail M.A."/>
            <person name="Rajandream M.A."/>
            <person name="Rutherford K.M."/>
            <person name="Simmonds M."/>
            <person name="Skelton J."/>
            <person name="Whitehead S."/>
            <person name="Spratt B.G."/>
            <person name="Barrell B.G."/>
        </authorList>
    </citation>
    <scope>NUCLEOTIDE SEQUENCE [LARGE SCALE GENOMIC DNA]</scope>
    <source>
        <strain>DSM 15465 / Z2491</strain>
    </source>
</reference>
<accession>Q9JWH4</accession>
<accession>A1IPJ5</accession>
<gene>
    <name evidence="1" type="primary">slyX</name>
    <name type="ordered locus">NMA0371</name>
</gene>
<comment type="similarity">
    <text evidence="1">Belongs to the SlyX family.</text>
</comment>
<proteinExistence type="inferred from homology"/>
<name>SLYX_NEIMA</name>
<sequence>MDAVQEFEHRITELEIQSALQEDVIAGLNAMVAELRQTLDLQQAQLRLLYQKMQDRNPDAQEPYSLRDEIPPHY</sequence>
<feature type="chain" id="PRO_0000209204" description="Protein SlyX homolog">
    <location>
        <begin position="1"/>
        <end position="74"/>
    </location>
</feature>
<organism>
    <name type="scientific">Neisseria meningitidis serogroup A / serotype 4A (strain DSM 15465 / Z2491)</name>
    <dbReference type="NCBI Taxonomy" id="122587"/>
    <lineage>
        <taxon>Bacteria</taxon>
        <taxon>Pseudomonadati</taxon>
        <taxon>Pseudomonadota</taxon>
        <taxon>Betaproteobacteria</taxon>
        <taxon>Neisseriales</taxon>
        <taxon>Neisseriaceae</taxon>
        <taxon>Neisseria</taxon>
    </lineage>
</organism>
<protein>
    <recommendedName>
        <fullName evidence="1">Protein SlyX homolog</fullName>
    </recommendedName>
</protein>
<dbReference type="EMBL" id="AL157959">
    <property type="protein sequence ID" value="CAM07665.1"/>
    <property type="molecule type" value="Genomic_DNA"/>
</dbReference>
<dbReference type="PIR" id="A81953">
    <property type="entry name" value="A81953"/>
</dbReference>
<dbReference type="RefSeq" id="WP_002247178.1">
    <property type="nucleotide sequence ID" value="NC_003116.1"/>
</dbReference>
<dbReference type="SMR" id="Q9JWH4"/>
<dbReference type="EnsemblBacteria" id="CAM07665">
    <property type="protein sequence ID" value="CAM07665"/>
    <property type="gene ID" value="NMA0371"/>
</dbReference>
<dbReference type="GeneID" id="93386991"/>
<dbReference type="KEGG" id="nma:NMA0371"/>
<dbReference type="HOGENOM" id="CLU_180796_3_1_4"/>
<dbReference type="Proteomes" id="UP000000626">
    <property type="component" value="Chromosome"/>
</dbReference>
<dbReference type="Gene3D" id="1.20.5.300">
    <property type="match status" value="1"/>
</dbReference>
<dbReference type="HAMAP" id="MF_00715">
    <property type="entry name" value="SlyX"/>
    <property type="match status" value="1"/>
</dbReference>
<dbReference type="InterPro" id="IPR007236">
    <property type="entry name" value="SlyX"/>
</dbReference>
<dbReference type="NCBIfam" id="NF003316">
    <property type="entry name" value="PRK04325.1"/>
    <property type="match status" value="1"/>
</dbReference>
<dbReference type="PANTHER" id="PTHR36508">
    <property type="entry name" value="PROTEIN SLYX"/>
    <property type="match status" value="1"/>
</dbReference>
<dbReference type="PANTHER" id="PTHR36508:SF1">
    <property type="entry name" value="PROTEIN SLYX"/>
    <property type="match status" value="1"/>
</dbReference>
<dbReference type="Pfam" id="PF04102">
    <property type="entry name" value="SlyX"/>
    <property type="match status" value="1"/>
</dbReference>